<organism>
    <name type="scientific">Xenopus laevis</name>
    <name type="common">African clawed frog</name>
    <dbReference type="NCBI Taxonomy" id="8355"/>
    <lineage>
        <taxon>Eukaryota</taxon>
        <taxon>Metazoa</taxon>
        <taxon>Chordata</taxon>
        <taxon>Craniata</taxon>
        <taxon>Vertebrata</taxon>
        <taxon>Euteleostomi</taxon>
        <taxon>Amphibia</taxon>
        <taxon>Batrachia</taxon>
        <taxon>Anura</taxon>
        <taxon>Pipoidea</taxon>
        <taxon>Pipidae</taxon>
        <taxon>Xenopodinae</taxon>
        <taxon>Xenopus</taxon>
        <taxon>Xenopus</taxon>
    </lineage>
</organism>
<sequence>MSKTNKSKSGSRSSRSRSASRSRSRSFSKSRSRSRSVSRSRKRRLSSRSRSRSYSPAHNRERNHPRVYQNRDFRGHNRGYRRPYYFRGRNRGFYPWGQYNRGGYGNYRSNWQNYRQAYSPRRGRSRSRSPKRRSPSPRSRSHSRNSDKSSSDRSRRSSSSRLSSNHSRVESSKRKSTKEKKSSSKDSRPSQAAGDNQGDEAKEQTFSGGTSQDIKGSESSKPWPDATTYGAGSASRASVSDLSPRERSPALKSPLQSVVVRRRSPRPSPVPKPSPPLSNASQMGSSMSGGAGYQSGAHQGQFDHGSGSLSPSKKSPVGKSPPATGSAYGSSQKEESAASGGAAYSKRYLEEQKTENGKDKEQKQTNADKEKLKEKGGFSDADVKMKSDPFAPKTDSEKPFRGSQSPKRYKLRDDFEKKMADFHKEELDEHDKDKSKGRKEPEFDDEPKFMSKVIAGASKNQEEEKSGKWESLHTGKEKQRKAEEMEDEPFTERSRKEERGGSKRSESGHRGFVPEKNFRVTAYKAVQEKSSSPPPRKTSESRDKLGSKGDFSSGKSSFSITREAQVNVRMDSFDEDLARPSGLLAQERKLCRDLVHSNKKEQEFRSIFQHIQSAQSQRSPSELFAQHIVTIVHHVKEHHFGSSGMTLHERFTKYLKRGNEQEAAKNKKSPEIHRRIDISPSTFRKHGLTHEELKSPREPGYKAEGKYKDDPVDLRLDIERRKKHKERDLKRGKSRESVDSRDSSHSRERSTEKTEKTHKGSKKQKKHRRARDRSRSSSSSSQSSHSYKAEEYPEEAEEREESTSGFDKSRLGTKDFVGPNERGGRARGTFQFRARGRGWGRGNYSGNNNNNSNNDFQKRSREEEWDPEYTPKSKKYYLHDDREGEGSDKWMGRGRGRGAFPRGRGRFMFRKSSTSPKWAHDKFSGEEGEIEDDESGTENREEKDSLQPSAE</sequence>
<comment type="function">
    <text evidence="1">Involved in pre-mRNA splicing. Involved in nuclear mRNA decay. Initially thought to play a role in transcriptional coactivation through its association with the TRAP complex; however, it is not regarded as a stable Mediator complex subunit. May play a role in the positive regulation of the circadian clock.</text>
</comment>
<comment type="subunit">
    <text evidence="2">Associated with the large multiprotein complex TRAP (Mediator complex-like).</text>
</comment>
<comment type="subcellular location">
    <subcellularLocation>
        <location evidence="1">Nucleus</location>
    </subcellularLocation>
</comment>
<comment type="similarity">
    <text evidence="5">Belongs to the BCLAF1/THRAP3 family.</text>
</comment>
<evidence type="ECO:0000250" key="1">
    <source>
        <dbReference type="UniProtKB" id="Q569Z6"/>
    </source>
</evidence>
<evidence type="ECO:0000250" key="2">
    <source>
        <dbReference type="UniProtKB" id="Q9Y2W1"/>
    </source>
</evidence>
<evidence type="ECO:0000255" key="3"/>
<evidence type="ECO:0000256" key="4">
    <source>
        <dbReference type="SAM" id="MobiDB-lite"/>
    </source>
</evidence>
<evidence type="ECO:0000305" key="5"/>
<keyword id="KW-0010">Activator</keyword>
<keyword id="KW-0067">ATP-binding</keyword>
<keyword id="KW-0090">Biological rhythms</keyword>
<keyword id="KW-0217">Developmental protein</keyword>
<keyword id="KW-0507">mRNA processing</keyword>
<keyword id="KW-0508">mRNA splicing</keyword>
<keyword id="KW-0547">Nucleotide-binding</keyword>
<keyword id="KW-0539">Nucleus</keyword>
<keyword id="KW-0675">Receptor</keyword>
<keyword id="KW-1185">Reference proteome</keyword>
<keyword id="KW-0804">Transcription</keyword>
<keyword id="KW-0805">Transcription regulation</keyword>
<gene>
    <name type="primary">thrap3</name>
    <name type="synonym">trap150</name>
</gene>
<proteinExistence type="evidence at transcript level"/>
<name>TR150_XENLA</name>
<reference key="1">
    <citation type="submission" date="2005-03" db="EMBL/GenBank/DDBJ databases">
        <authorList>
            <consortium name="NIH - Xenopus Gene Collection (XGC) project"/>
        </authorList>
    </citation>
    <scope>NUCLEOTIDE SEQUENCE [LARGE SCALE MRNA]</scope>
    <source>
        <tissue>Embryo</tissue>
    </source>
</reference>
<feature type="chain" id="PRO_0000235982" description="Thyroid hormone receptor-associated protein 3">
    <location>
        <begin position="1"/>
        <end position="951"/>
    </location>
</feature>
<feature type="region of interest" description="Disordered" evidence="4">
    <location>
        <begin position="1"/>
        <end position="94"/>
    </location>
</feature>
<feature type="region of interest" description="Disordered" evidence="4">
    <location>
        <begin position="117"/>
        <end position="558"/>
    </location>
</feature>
<feature type="region of interest" description="Disordered" evidence="4">
    <location>
        <begin position="661"/>
        <end position="951"/>
    </location>
</feature>
<feature type="compositionally biased region" description="Low complexity" evidence="4">
    <location>
        <begin position="1"/>
        <end position="13"/>
    </location>
</feature>
<feature type="compositionally biased region" description="Basic residues" evidence="4">
    <location>
        <begin position="14"/>
        <end position="51"/>
    </location>
</feature>
<feature type="compositionally biased region" description="Basic and acidic residues" evidence="4">
    <location>
        <begin position="58"/>
        <end position="75"/>
    </location>
</feature>
<feature type="compositionally biased region" description="Low complexity" evidence="4">
    <location>
        <begin position="82"/>
        <end position="94"/>
    </location>
</feature>
<feature type="compositionally biased region" description="Basic residues" evidence="4">
    <location>
        <begin position="121"/>
        <end position="143"/>
    </location>
</feature>
<feature type="compositionally biased region" description="Basic and acidic residues" evidence="4">
    <location>
        <begin position="144"/>
        <end position="155"/>
    </location>
</feature>
<feature type="compositionally biased region" description="Low complexity" evidence="4">
    <location>
        <begin position="157"/>
        <end position="166"/>
    </location>
</feature>
<feature type="compositionally biased region" description="Basic and acidic residues" evidence="4">
    <location>
        <begin position="167"/>
        <end position="188"/>
    </location>
</feature>
<feature type="compositionally biased region" description="Polar residues" evidence="4">
    <location>
        <begin position="204"/>
        <end position="220"/>
    </location>
</feature>
<feature type="compositionally biased region" description="Pro residues" evidence="4">
    <location>
        <begin position="266"/>
        <end position="276"/>
    </location>
</feature>
<feature type="compositionally biased region" description="Low complexity" evidence="4">
    <location>
        <begin position="305"/>
        <end position="322"/>
    </location>
</feature>
<feature type="compositionally biased region" description="Low complexity" evidence="4">
    <location>
        <begin position="337"/>
        <end position="346"/>
    </location>
</feature>
<feature type="compositionally biased region" description="Basic and acidic residues" evidence="4">
    <location>
        <begin position="347"/>
        <end position="387"/>
    </location>
</feature>
<feature type="compositionally biased region" description="Basic and acidic residues" evidence="4">
    <location>
        <begin position="411"/>
        <end position="449"/>
    </location>
</feature>
<feature type="compositionally biased region" description="Basic and acidic residues" evidence="4">
    <location>
        <begin position="460"/>
        <end position="483"/>
    </location>
</feature>
<feature type="compositionally biased region" description="Basic and acidic residues" evidence="4">
    <location>
        <begin position="490"/>
        <end position="518"/>
    </location>
</feature>
<feature type="compositionally biased region" description="Basic and acidic residues" evidence="4">
    <location>
        <begin position="537"/>
        <end position="547"/>
    </location>
</feature>
<feature type="compositionally biased region" description="Low complexity" evidence="4">
    <location>
        <begin position="548"/>
        <end position="558"/>
    </location>
</feature>
<feature type="compositionally biased region" description="Basic and acidic residues" evidence="4">
    <location>
        <begin position="661"/>
        <end position="677"/>
    </location>
</feature>
<feature type="compositionally biased region" description="Basic and acidic residues" evidence="4">
    <location>
        <begin position="688"/>
        <end position="758"/>
    </location>
</feature>
<feature type="compositionally biased region" description="Basic residues" evidence="4">
    <location>
        <begin position="759"/>
        <end position="772"/>
    </location>
</feature>
<feature type="compositionally biased region" description="Low complexity" evidence="4">
    <location>
        <begin position="776"/>
        <end position="786"/>
    </location>
</feature>
<feature type="compositionally biased region" description="Low complexity" evidence="4">
    <location>
        <begin position="844"/>
        <end position="854"/>
    </location>
</feature>
<feature type="compositionally biased region" description="Basic and acidic residues" evidence="4">
    <location>
        <begin position="877"/>
        <end position="891"/>
    </location>
</feature>
<feature type="compositionally biased region" description="Acidic residues" evidence="4">
    <location>
        <begin position="926"/>
        <end position="936"/>
    </location>
</feature>
<feature type="binding site" evidence="3">
    <location>
        <begin position="549"/>
        <end position="556"/>
    </location>
    <ligand>
        <name>ATP</name>
        <dbReference type="ChEBI" id="CHEBI:30616"/>
    </ligand>
</feature>
<dbReference type="EMBL" id="BC091635">
    <property type="protein sequence ID" value="AAH91635.1"/>
    <property type="molecule type" value="mRNA"/>
</dbReference>
<dbReference type="RefSeq" id="NP_001184195.1">
    <property type="nucleotide sequence ID" value="NM_001197266.1"/>
</dbReference>
<dbReference type="Proteomes" id="UP000186698">
    <property type="component" value="Unplaced"/>
</dbReference>
<dbReference type="GO" id="GO:0016592">
    <property type="term" value="C:mediator complex"/>
    <property type="evidence" value="ECO:0000318"/>
    <property type="project" value="GO_Central"/>
</dbReference>
<dbReference type="GO" id="GO:0005524">
    <property type="term" value="F:ATP binding"/>
    <property type="evidence" value="ECO:0007669"/>
    <property type="project" value="UniProtKB-KW"/>
</dbReference>
<dbReference type="GO" id="GO:0003677">
    <property type="term" value="F:DNA binding"/>
    <property type="evidence" value="ECO:0000318"/>
    <property type="project" value="GO_Central"/>
</dbReference>
<dbReference type="GO" id="GO:0003712">
    <property type="term" value="F:transcription coregulator activity"/>
    <property type="evidence" value="ECO:0000318"/>
    <property type="project" value="GO_Central"/>
</dbReference>
<dbReference type="GO" id="GO:0006397">
    <property type="term" value="P:mRNA processing"/>
    <property type="evidence" value="ECO:0007669"/>
    <property type="project" value="UniProtKB-KW"/>
</dbReference>
<dbReference type="GO" id="GO:0045944">
    <property type="term" value="P:positive regulation of transcription by RNA polymerase II"/>
    <property type="evidence" value="ECO:0000318"/>
    <property type="project" value="GO_Central"/>
</dbReference>
<dbReference type="GO" id="GO:0048511">
    <property type="term" value="P:rhythmic process"/>
    <property type="evidence" value="ECO:0007669"/>
    <property type="project" value="UniProtKB-KW"/>
</dbReference>
<dbReference type="GO" id="GO:0008380">
    <property type="term" value="P:RNA splicing"/>
    <property type="evidence" value="ECO:0007669"/>
    <property type="project" value="UniProtKB-KW"/>
</dbReference>
<dbReference type="InterPro" id="IPR029199">
    <property type="entry name" value="THRAP3_BCLAF1"/>
</dbReference>
<dbReference type="PANTHER" id="PTHR15268">
    <property type="entry name" value="THRAP3/BCLAF1"/>
    <property type="match status" value="1"/>
</dbReference>
<dbReference type="PANTHER" id="PTHR15268:SF16">
    <property type="entry name" value="THYROID HORMONE RECEPTOR-ASSOCIATED PROTEIN 3"/>
    <property type="match status" value="1"/>
</dbReference>
<dbReference type="Pfam" id="PF15440">
    <property type="entry name" value="THRAP3_BCLAF1"/>
    <property type="match status" value="1"/>
</dbReference>
<protein>
    <recommendedName>
        <fullName>Thyroid hormone receptor-associated protein 3</fullName>
    </recommendedName>
    <alternativeName>
        <fullName>Thyroid hormone receptor-associated protein complex 150 kDa component</fullName>
        <shortName>Trap150</shortName>
    </alternativeName>
</protein>
<accession>Q5BJ39</accession>